<keyword id="KW-0963">Cytoplasm</keyword>
<organism>
    <name type="scientific">Streptococcus pyogenes serotype M18 (strain MGAS8232)</name>
    <dbReference type="NCBI Taxonomy" id="186103"/>
    <lineage>
        <taxon>Bacteria</taxon>
        <taxon>Bacillati</taxon>
        <taxon>Bacillota</taxon>
        <taxon>Bacilli</taxon>
        <taxon>Lactobacillales</taxon>
        <taxon>Streptococcaceae</taxon>
        <taxon>Streptococcus</taxon>
    </lineage>
</organism>
<accession>P60082</accession>
<accession>Q99YI5</accession>
<feature type="chain" id="PRO_0000095005" description="UPF0291 protein spyM18_1699">
    <location>
        <begin position="1"/>
        <end position="85"/>
    </location>
</feature>
<feature type="region of interest" description="Disordered" evidence="2">
    <location>
        <begin position="62"/>
        <end position="85"/>
    </location>
</feature>
<protein>
    <recommendedName>
        <fullName evidence="1">UPF0291 protein spyM18_1699</fullName>
    </recommendedName>
</protein>
<gene>
    <name type="ordered locus">spyM18_1699</name>
</gene>
<sequence>MDPKKIARINELAKKKKTVGLTGPEKVEQAKLREEYIEGYRRSVRHHIEGIKLVDEEGNDVTPEKLRQVQREKGLHGRSLDDPKS</sequence>
<name>Y1699_STRP8</name>
<comment type="subcellular location">
    <subcellularLocation>
        <location evidence="1">Cytoplasm</location>
    </subcellularLocation>
</comment>
<comment type="similarity">
    <text evidence="1">Belongs to the UPF0291 family.</text>
</comment>
<evidence type="ECO:0000255" key="1">
    <source>
        <dbReference type="HAMAP-Rule" id="MF_01103"/>
    </source>
</evidence>
<evidence type="ECO:0000256" key="2">
    <source>
        <dbReference type="SAM" id="MobiDB-lite"/>
    </source>
</evidence>
<reference key="1">
    <citation type="journal article" date="2002" name="Proc. Natl. Acad. Sci. U.S.A.">
        <title>Genome sequence and comparative microarray analysis of serotype M18 group A Streptococcus strains associated with acute rheumatic fever outbreaks.</title>
        <authorList>
            <person name="Smoot J.C."/>
            <person name="Barbian K.D."/>
            <person name="Van Gompel J.J."/>
            <person name="Smoot L.M."/>
            <person name="Chaussee M.S."/>
            <person name="Sylva G.L."/>
            <person name="Sturdevant D.E."/>
            <person name="Ricklefs S.M."/>
            <person name="Porcella S.F."/>
            <person name="Parkins L.D."/>
            <person name="Beres S.B."/>
            <person name="Campbell D.S."/>
            <person name="Smith T.M."/>
            <person name="Zhang Q."/>
            <person name="Kapur V."/>
            <person name="Daly J.A."/>
            <person name="Veasy L.G."/>
            <person name="Musser J.M."/>
        </authorList>
    </citation>
    <scope>NUCLEOTIDE SEQUENCE [LARGE SCALE GENOMIC DNA]</scope>
    <source>
        <strain>MGAS8232</strain>
    </source>
</reference>
<dbReference type="EMBL" id="AE009949">
    <property type="protein sequence ID" value="AAL98233.1"/>
    <property type="molecule type" value="Genomic_DNA"/>
</dbReference>
<dbReference type="RefSeq" id="WP_002983550.1">
    <property type="nucleotide sequence ID" value="NC_003485.1"/>
</dbReference>
<dbReference type="SMR" id="P60082"/>
<dbReference type="KEGG" id="spm:spyM18_1699"/>
<dbReference type="HOGENOM" id="CLU_173137_0_2_9"/>
<dbReference type="GO" id="GO:0005737">
    <property type="term" value="C:cytoplasm"/>
    <property type="evidence" value="ECO:0007669"/>
    <property type="project" value="UniProtKB-SubCell"/>
</dbReference>
<dbReference type="Gene3D" id="1.10.287.540">
    <property type="entry name" value="Helix hairpin bin"/>
    <property type="match status" value="1"/>
</dbReference>
<dbReference type="HAMAP" id="MF_01103">
    <property type="entry name" value="UPF0291"/>
    <property type="match status" value="1"/>
</dbReference>
<dbReference type="InterPro" id="IPR009242">
    <property type="entry name" value="DUF896"/>
</dbReference>
<dbReference type="NCBIfam" id="NF002711">
    <property type="entry name" value="PRK02539.1"/>
    <property type="match status" value="1"/>
</dbReference>
<dbReference type="PANTHER" id="PTHR37300">
    <property type="entry name" value="UPF0291 PROTEIN CBO2609/CLC_2481"/>
    <property type="match status" value="1"/>
</dbReference>
<dbReference type="PANTHER" id="PTHR37300:SF1">
    <property type="entry name" value="UPF0291 PROTEIN YNZC"/>
    <property type="match status" value="1"/>
</dbReference>
<dbReference type="Pfam" id="PF05979">
    <property type="entry name" value="DUF896"/>
    <property type="match status" value="1"/>
</dbReference>
<dbReference type="SUPFAM" id="SSF158221">
    <property type="entry name" value="YnzC-like"/>
    <property type="match status" value="1"/>
</dbReference>
<proteinExistence type="inferred from homology"/>